<keyword id="KW-0450">Lipoyl</keyword>
<keyword id="KW-1185">Reference proteome</keyword>
<feature type="chain" id="PRO_0000166227" description="Glycine cleavage system H protein">
    <location>
        <begin position="1"/>
        <end position="132"/>
    </location>
</feature>
<feature type="domain" description="Lipoyl-binding" evidence="2">
    <location>
        <begin position="24"/>
        <end position="106"/>
    </location>
</feature>
<feature type="modified residue" description="N6-lipoyllysine" evidence="1">
    <location>
        <position position="65"/>
    </location>
</feature>
<reference key="1">
    <citation type="journal article" date="2001" name="Nature">
        <title>Massive gene decay in the leprosy bacillus.</title>
        <authorList>
            <person name="Cole S.T."/>
            <person name="Eiglmeier K."/>
            <person name="Parkhill J."/>
            <person name="James K.D."/>
            <person name="Thomson N.R."/>
            <person name="Wheeler P.R."/>
            <person name="Honore N."/>
            <person name="Garnier T."/>
            <person name="Churcher C.M."/>
            <person name="Harris D.E."/>
            <person name="Mungall K.L."/>
            <person name="Basham D."/>
            <person name="Brown D."/>
            <person name="Chillingworth T."/>
            <person name="Connor R."/>
            <person name="Davies R.M."/>
            <person name="Devlin K."/>
            <person name="Duthoy S."/>
            <person name="Feltwell T."/>
            <person name="Fraser A."/>
            <person name="Hamlin N."/>
            <person name="Holroyd S."/>
            <person name="Hornsby T."/>
            <person name="Jagels K."/>
            <person name="Lacroix C."/>
            <person name="Maclean J."/>
            <person name="Moule S."/>
            <person name="Murphy L.D."/>
            <person name="Oliver K."/>
            <person name="Quail M.A."/>
            <person name="Rajandream M.A."/>
            <person name="Rutherford K.M."/>
            <person name="Rutter S."/>
            <person name="Seeger K."/>
            <person name="Simon S."/>
            <person name="Simmonds M."/>
            <person name="Skelton J."/>
            <person name="Squares R."/>
            <person name="Squares S."/>
            <person name="Stevens K."/>
            <person name="Taylor K."/>
            <person name="Whitehead S."/>
            <person name="Woodward J.R."/>
            <person name="Barrell B.G."/>
        </authorList>
    </citation>
    <scope>NUCLEOTIDE SEQUENCE [LARGE SCALE GENOMIC DNA]</scope>
    <source>
        <strain>TN</strain>
    </source>
</reference>
<sequence length="132" mass="14071">MSDIPSDLHYTAEHEWIRRSREDTVRVGLTDFAQSTLGDVVFVQLPEVGAELAAGKSFGEVESTKSVSDLYAPVSGTVSAVNTDLEGSPQLVNSDPYGAGWLLDVHVSDVGALESAIATLLDAETYRGTLTK</sequence>
<proteinExistence type="inferred from homology"/>
<accession>O32920</accession>
<evidence type="ECO:0000255" key="1">
    <source>
        <dbReference type="HAMAP-Rule" id="MF_00272"/>
    </source>
</evidence>
<evidence type="ECO:0000255" key="2">
    <source>
        <dbReference type="PROSITE-ProRule" id="PRU01066"/>
    </source>
</evidence>
<protein>
    <recommendedName>
        <fullName evidence="1">Glycine cleavage system H protein</fullName>
    </recommendedName>
</protein>
<name>GCSH_MYCLE</name>
<comment type="function">
    <text evidence="1">The glycine cleavage system catalyzes the degradation of glycine. The H protein shuttles the methylamine group of glycine from the P protein to the T protein.</text>
</comment>
<comment type="cofactor">
    <cofactor evidence="1">
        <name>(R)-lipoate</name>
        <dbReference type="ChEBI" id="CHEBI:83088"/>
    </cofactor>
    <text evidence="1">Binds 1 lipoyl cofactor covalently.</text>
</comment>
<comment type="subunit">
    <text evidence="1">The glycine cleavage system is composed of four proteins: P, T, L and H.</text>
</comment>
<comment type="similarity">
    <text evidence="1">Belongs to the GcvH family.</text>
</comment>
<gene>
    <name evidence="1" type="primary">gcvH</name>
    <name type="ordered locus">ML2077</name>
    <name type="ORF">MLCB1788.37c</name>
</gene>
<dbReference type="EMBL" id="AL008609">
    <property type="protein sequence ID" value="CAA15469.1"/>
    <property type="molecule type" value="Genomic_DNA"/>
</dbReference>
<dbReference type="EMBL" id="AL583924">
    <property type="protein sequence ID" value="CAC31032.1"/>
    <property type="molecule type" value="Genomic_DNA"/>
</dbReference>
<dbReference type="PIR" id="T44759">
    <property type="entry name" value="T44759"/>
</dbReference>
<dbReference type="RefSeq" id="NP_302386.1">
    <property type="nucleotide sequence ID" value="NC_002677.1"/>
</dbReference>
<dbReference type="RefSeq" id="WP_010908706.1">
    <property type="nucleotide sequence ID" value="NC_002677.1"/>
</dbReference>
<dbReference type="SMR" id="O32920"/>
<dbReference type="STRING" id="272631.gene:17575929"/>
<dbReference type="KEGG" id="mle:ML2077"/>
<dbReference type="PATRIC" id="fig|272631.5.peg.3907"/>
<dbReference type="Leproma" id="ML2077"/>
<dbReference type="eggNOG" id="COG0509">
    <property type="taxonomic scope" value="Bacteria"/>
</dbReference>
<dbReference type="HOGENOM" id="CLU_097408_2_0_11"/>
<dbReference type="OrthoDB" id="9796712at2"/>
<dbReference type="Proteomes" id="UP000000806">
    <property type="component" value="Chromosome"/>
</dbReference>
<dbReference type="GO" id="GO:0005829">
    <property type="term" value="C:cytosol"/>
    <property type="evidence" value="ECO:0007669"/>
    <property type="project" value="TreeGrafter"/>
</dbReference>
<dbReference type="GO" id="GO:0005960">
    <property type="term" value="C:glycine cleavage complex"/>
    <property type="evidence" value="ECO:0007669"/>
    <property type="project" value="InterPro"/>
</dbReference>
<dbReference type="GO" id="GO:0019464">
    <property type="term" value="P:glycine decarboxylation via glycine cleavage system"/>
    <property type="evidence" value="ECO:0007669"/>
    <property type="project" value="UniProtKB-UniRule"/>
</dbReference>
<dbReference type="CDD" id="cd06848">
    <property type="entry name" value="GCS_H"/>
    <property type="match status" value="1"/>
</dbReference>
<dbReference type="Gene3D" id="2.40.50.100">
    <property type="match status" value="1"/>
</dbReference>
<dbReference type="HAMAP" id="MF_00272">
    <property type="entry name" value="GcvH"/>
    <property type="match status" value="1"/>
</dbReference>
<dbReference type="InterPro" id="IPR003016">
    <property type="entry name" value="2-oxoA_DH_lipoyl-BS"/>
</dbReference>
<dbReference type="InterPro" id="IPR000089">
    <property type="entry name" value="Biotin_lipoyl"/>
</dbReference>
<dbReference type="InterPro" id="IPR002930">
    <property type="entry name" value="GCV_H"/>
</dbReference>
<dbReference type="InterPro" id="IPR033753">
    <property type="entry name" value="GCV_H/Fam206"/>
</dbReference>
<dbReference type="InterPro" id="IPR017453">
    <property type="entry name" value="GCV_H_sub"/>
</dbReference>
<dbReference type="InterPro" id="IPR011053">
    <property type="entry name" value="Single_hybrid_motif"/>
</dbReference>
<dbReference type="NCBIfam" id="TIGR00527">
    <property type="entry name" value="gcvH"/>
    <property type="match status" value="1"/>
</dbReference>
<dbReference type="NCBIfam" id="NF002270">
    <property type="entry name" value="PRK01202.1"/>
    <property type="match status" value="1"/>
</dbReference>
<dbReference type="PANTHER" id="PTHR11715">
    <property type="entry name" value="GLYCINE CLEAVAGE SYSTEM H PROTEIN"/>
    <property type="match status" value="1"/>
</dbReference>
<dbReference type="PANTHER" id="PTHR11715:SF3">
    <property type="entry name" value="GLYCINE CLEAVAGE SYSTEM H PROTEIN-RELATED"/>
    <property type="match status" value="1"/>
</dbReference>
<dbReference type="Pfam" id="PF01597">
    <property type="entry name" value="GCV_H"/>
    <property type="match status" value="1"/>
</dbReference>
<dbReference type="SUPFAM" id="SSF51230">
    <property type="entry name" value="Single hybrid motif"/>
    <property type="match status" value="1"/>
</dbReference>
<dbReference type="PROSITE" id="PS50968">
    <property type="entry name" value="BIOTINYL_LIPOYL"/>
    <property type="match status" value="1"/>
</dbReference>
<dbReference type="PROSITE" id="PS00189">
    <property type="entry name" value="LIPOYL"/>
    <property type="match status" value="1"/>
</dbReference>
<organism>
    <name type="scientific">Mycobacterium leprae (strain TN)</name>
    <dbReference type="NCBI Taxonomy" id="272631"/>
    <lineage>
        <taxon>Bacteria</taxon>
        <taxon>Bacillati</taxon>
        <taxon>Actinomycetota</taxon>
        <taxon>Actinomycetes</taxon>
        <taxon>Mycobacteriales</taxon>
        <taxon>Mycobacteriaceae</taxon>
        <taxon>Mycobacterium</taxon>
    </lineage>
</organism>